<feature type="chain" id="PRO_0000285422" description="Homeobox protein Hox-B1">
    <location>
        <begin position="1"/>
        <end position="304"/>
    </location>
</feature>
<feature type="DNA-binding region" description="Homeobox" evidence="2">
    <location>
        <begin position="206"/>
        <end position="265"/>
    </location>
</feature>
<feature type="region of interest" description="Disordered" evidence="3">
    <location>
        <begin position="25"/>
        <end position="80"/>
    </location>
</feature>
<feature type="region of interest" description="Disordered" evidence="3">
    <location>
        <begin position="130"/>
        <end position="151"/>
    </location>
</feature>
<feature type="region of interest" description="Disordered" evidence="3">
    <location>
        <begin position="187"/>
        <end position="211"/>
    </location>
</feature>
<feature type="region of interest" description="Disordered" evidence="3">
    <location>
        <begin position="257"/>
        <end position="304"/>
    </location>
</feature>
<feature type="short sequence motif" description="Antp-type hexapeptide">
    <location>
        <begin position="182"/>
        <end position="187"/>
    </location>
</feature>
<feature type="compositionally biased region" description="Low complexity" evidence="3">
    <location>
        <begin position="25"/>
        <end position="39"/>
    </location>
</feature>
<feature type="compositionally biased region" description="Polar residues" evidence="3">
    <location>
        <begin position="58"/>
        <end position="67"/>
    </location>
</feature>
<feature type="compositionally biased region" description="Polar residues" evidence="3">
    <location>
        <begin position="287"/>
        <end position="304"/>
    </location>
</feature>
<sequence>MDYNRMNSFLEYPLCNRGPSAYSAHSAHSAPTSFPPSSTQAVDSYASEGRYGGGLSSPAFQQNSGYPAQQPPSALGVPFPSSAPSGYAPAACSPSYGPSQYYPLGQSEGDGGYFHPTSYGAQLGGLSDGYGAGGAGPGPYPPQHPPYGNEQTASFAPAYADLLSEDKEAPCPSEPNTPTARTFDWMKVKRNPPKTGKVSEPGLGSPSGLRTNFTTRQLTELEKEFHFNKYLSRARRVEIAATLELNETQVKIWFQNRRMKQKKREREGGRVPPAPPGCPKEAAGDASDQSTCTSPEASPSSVTS</sequence>
<organism>
    <name type="scientific">Ateles geoffroyi</name>
    <name type="common">Black-handed spider monkey</name>
    <name type="synonym">Geoffroy's spider monkey</name>
    <dbReference type="NCBI Taxonomy" id="9509"/>
    <lineage>
        <taxon>Eukaryota</taxon>
        <taxon>Metazoa</taxon>
        <taxon>Chordata</taxon>
        <taxon>Craniata</taxon>
        <taxon>Vertebrata</taxon>
        <taxon>Euteleostomi</taxon>
        <taxon>Mammalia</taxon>
        <taxon>Eutheria</taxon>
        <taxon>Euarchontoglires</taxon>
        <taxon>Primates</taxon>
        <taxon>Haplorrhini</taxon>
        <taxon>Platyrrhini</taxon>
        <taxon>Atelidae</taxon>
        <taxon>Atelinae</taxon>
        <taxon>Ateles</taxon>
    </lineage>
</organism>
<dbReference type="EMBL" id="DQ976599">
    <property type="protein sequence ID" value="ABM65911.1"/>
    <property type="molecule type" value="Genomic_DNA"/>
</dbReference>
<dbReference type="SMR" id="A2D4R4"/>
<dbReference type="OrthoDB" id="6159439at2759"/>
<dbReference type="GO" id="GO:0005634">
    <property type="term" value="C:nucleus"/>
    <property type="evidence" value="ECO:0007669"/>
    <property type="project" value="UniProtKB-SubCell"/>
</dbReference>
<dbReference type="GO" id="GO:0000981">
    <property type="term" value="F:DNA-binding transcription factor activity, RNA polymerase II-specific"/>
    <property type="evidence" value="ECO:0007669"/>
    <property type="project" value="InterPro"/>
</dbReference>
<dbReference type="GO" id="GO:0000978">
    <property type="term" value="F:RNA polymerase II cis-regulatory region sequence-specific DNA binding"/>
    <property type="evidence" value="ECO:0007669"/>
    <property type="project" value="TreeGrafter"/>
</dbReference>
<dbReference type="CDD" id="cd00086">
    <property type="entry name" value="homeodomain"/>
    <property type="match status" value="1"/>
</dbReference>
<dbReference type="FunFam" id="1.10.10.60:FF:000113">
    <property type="entry name" value="homeobox protein Hox-B1"/>
    <property type="match status" value="1"/>
</dbReference>
<dbReference type="Gene3D" id="1.10.10.60">
    <property type="entry name" value="Homeodomain-like"/>
    <property type="match status" value="1"/>
</dbReference>
<dbReference type="InterPro" id="IPR001356">
    <property type="entry name" value="HD"/>
</dbReference>
<dbReference type="InterPro" id="IPR020479">
    <property type="entry name" value="HD_metazoa"/>
</dbReference>
<dbReference type="InterPro" id="IPR017970">
    <property type="entry name" value="Homeobox_CS"/>
</dbReference>
<dbReference type="InterPro" id="IPR009057">
    <property type="entry name" value="Homeodomain-like_sf"/>
</dbReference>
<dbReference type="InterPro" id="IPR046327">
    <property type="entry name" value="HXA1/B1/D1"/>
</dbReference>
<dbReference type="PANTHER" id="PTHR45946:SF5">
    <property type="entry name" value="HOMEOBOX PROTEIN HOX-B1"/>
    <property type="match status" value="1"/>
</dbReference>
<dbReference type="PANTHER" id="PTHR45946">
    <property type="entry name" value="HOMEOBOX PROTEIN ROUGH-RELATED"/>
    <property type="match status" value="1"/>
</dbReference>
<dbReference type="Pfam" id="PF00046">
    <property type="entry name" value="Homeodomain"/>
    <property type="match status" value="1"/>
</dbReference>
<dbReference type="PRINTS" id="PR00024">
    <property type="entry name" value="HOMEOBOX"/>
</dbReference>
<dbReference type="SMART" id="SM00389">
    <property type="entry name" value="HOX"/>
    <property type="match status" value="1"/>
</dbReference>
<dbReference type="SUPFAM" id="SSF46689">
    <property type="entry name" value="Homeodomain-like"/>
    <property type="match status" value="1"/>
</dbReference>
<dbReference type="PROSITE" id="PS00027">
    <property type="entry name" value="HOMEOBOX_1"/>
    <property type="match status" value="1"/>
</dbReference>
<dbReference type="PROSITE" id="PS50071">
    <property type="entry name" value="HOMEOBOX_2"/>
    <property type="match status" value="1"/>
</dbReference>
<reference key="1">
    <citation type="submission" date="2006-08" db="EMBL/GenBank/DDBJ databases">
        <title>Positive selection in transcription factor genes on the human lineage.</title>
        <authorList>
            <person name="Nickel G.C."/>
            <person name="Tefft D.L."/>
            <person name="Trevarthen K."/>
            <person name="Funt J."/>
            <person name="Adams M.D."/>
        </authorList>
    </citation>
    <scope>NUCLEOTIDE SEQUENCE [GENOMIC DNA]</scope>
</reference>
<protein>
    <recommendedName>
        <fullName>Homeobox protein Hox-B1</fullName>
    </recommendedName>
</protein>
<accession>A2D4R4</accession>
<name>HXB1_ATEGE</name>
<gene>
    <name type="primary">HOXB1</name>
</gene>
<proteinExistence type="inferred from homology"/>
<keyword id="KW-0217">Developmental protein</keyword>
<keyword id="KW-0238">DNA-binding</keyword>
<keyword id="KW-0371">Homeobox</keyword>
<keyword id="KW-0539">Nucleus</keyword>
<keyword id="KW-0804">Transcription</keyword>
<keyword id="KW-0805">Transcription regulation</keyword>
<evidence type="ECO:0000250" key="1"/>
<evidence type="ECO:0000255" key="2">
    <source>
        <dbReference type="PROSITE-ProRule" id="PRU00108"/>
    </source>
</evidence>
<evidence type="ECO:0000256" key="3">
    <source>
        <dbReference type="SAM" id="MobiDB-lite"/>
    </source>
</evidence>
<evidence type="ECO:0000305" key="4"/>
<comment type="function">
    <text evidence="1">Sequence-specific transcription factor which is part of a developmental regulatory system that provides cells with specific positional identities on the anterior-posterior axis. Acts on the anterior body structures (By similarity).</text>
</comment>
<comment type="subcellular location">
    <subcellularLocation>
        <location evidence="2">Nucleus</location>
    </subcellularLocation>
</comment>
<comment type="similarity">
    <text evidence="4">Belongs to the Antp homeobox family. Labial subfamily.</text>
</comment>